<feature type="chain" id="PRO_0000173847" description="26S proteasome non-ATPase regulatory subunit 8">
    <location>
        <begin position="1"/>
        <end position="353"/>
    </location>
</feature>
<feature type="domain" description="PCI" evidence="2">
    <location>
        <begin position="165"/>
        <end position="334"/>
    </location>
</feature>
<feature type="region of interest" description="Disordered" evidence="3">
    <location>
        <begin position="1"/>
        <end position="25"/>
    </location>
</feature>
<feature type="cross-link" description="Glycyl lysine isopeptide (Lys-Gly) (interchain with G-Cter in SUMO2)" evidence="1">
    <location>
        <position position="300"/>
    </location>
</feature>
<protein>
    <recommendedName>
        <fullName>26S proteasome non-ATPase regulatory subunit 8</fullName>
    </recommendedName>
    <alternativeName>
        <fullName>26S proteasome regulatory subunit RPN12</fullName>
    </alternativeName>
    <alternativeName>
        <fullName>26S proteasome regulatory subunit S14</fullName>
    </alternativeName>
</protein>
<organism>
    <name type="scientific">Mus musculus</name>
    <name type="common">Mouse</name>
    <dbReference type="NCBI Taxonomy" id="10090"/>
    <lineage>
        <taxon>Eukaryota</taxon>
        <taxon>Metazoa</taxon>
        <taxon>Chordata</taxon>
        <taxon>Craniata</taxon>
        <taxon>Vertebrata</taxon>
        <taxon>Euteleostomi</taxon>
        <taxon>Mammalia</taxon>
        <taxon>Eutheria</taxon>
        <taxon>Euarchontoglires</taxon>
        <taxon>Glires</taxon>
        <taxon>Rodentia</taxon>
        <taxon>Myomorpha</taxon>
        <taxon>Muroidea</taxon>
        <taxon>Muridae</taxon>
        <taxon>Murinae</taxon>
        <taxon>Mus</taxon>
        <taxon>Mus</taxon>
    </lineage>
</organism>
<gene>
    <name type="primary">Psmd8</name>
</gene>
<name>PSMD8_MOUSE</name>
<accession>Q9CX56</accession>
<sequence>MFIKGRAAKTPRGEPRRSSRGGRKLAVVAPPPVLGSTSRPHFRRESIARRRCRKSGRRLAASRKMAATAATVNGSTTVSSSGPAATSVGILQAAAGMYEQLKDEWNRKNPNLSKCGEELGRLKLVLLELNFLPTTGTKLTKQQLILARDILEIGAQWSILCKDIPSFERYMAQLKCYYFDYKEQLPESAYMHQLLGLNLLFLLSQNRVAEFHTELERLPAKDIQTNVYIKHPVSLEQYLMEGSYNKVFLAKGNIPAESYTFFIDILLDTIRDEIAGCIEKAYEKILFAEATRILFFSTPKKMTDYAKKRGWVLGPNNYYSFASQQQKPEDSTIPSTELAKQVIEYARQLEMIV</sequence>
<dbReference type="EMBL" id="AC164564">
    <property type="status" value="NOT_ANNOTATED_CDS"/>
    <property type="molecule type" value="Genomic_DNA"/>
</dbReference>
<dbReference type="EMBL" id="AK020132">
    <property type="protein sequence ID" value="BAB32006.2"/>
    <property type="status" value="ALT_INIT"/>
    <property type="molecule type" value="mRNA"/>
</dbReference>
<dbReference type="CCDS" id="CCDS52169.1"/>
<dbReference type="RefSeq" id="NP_080821.3">
    <property type="nucleotide sequence ID" value="NM_026545.3"/>
</dbReference>
<dbReference type="SMR" id="Q9CX56"/>
<dbReference type="BioGRID" id="208250">
    <property type="interactions" value="58"/>
</dbReference>
<dbReference type="FunCoup" id="Q9CX56">
    <property type="interactions" value="2820"/>
</dbReference>
<dbReference type="IntAct" id="Q9CX56">
    <property type="interactions" value="3"/>
</dbReference>
<dbReference type="MINT" id="Q9CX56"/>
<dbReference type="STRING" id="10090.ENSMUSP00000051657"/>
<dbReference type="GlyGen" id="Q9CX56">
    <property type="glycosylation" value="2 sites, 1 N-linked glycan (1 site), 1 O-linked glycan (1 site)"/>
</dbReference>
<dbReference type="iPTMnet" id="Q9CX56"/>
<dbReference type="PhosphoSitePlus" id="Q9CX56"/>
<dbReference type="SwissPalm" id="Q9CX56"/>
<dbReference type="jPOST" id="Q9CX56"/>
<dbReference type="PaxDb" id="10090-ENSMUSP00000051657"/>
<dbReference type="ProteomicsDB" id="301891"/>
<dbReference type="Pumba" id="Q9CX56"/>
<dbReference type="Antibodypedia" id="1714">
    <property type="antibodies" value="160 antibodies from 27 providers"/>
</dbReference>
<dbReference type="DNASU" id="57296"/>
<dbReference type="Ensembl" id="ENSMUST00000059642.17">
    <property type="protein sequence ID" value="ENSMUSP00000051657.10"/>
    <property type="gene ID" value="ENSMUSG00000030591.18"/>
</dbReference>
<dbReference type="Ensembl" id="ENSMUST00000186182.2">
    <property type="protein sequence ID" value="ENSMUSP00000139514.2"/>
    <property type="gene ID" value="ENSMUSG00000030591.18"/>
</dbReference>
<dbReference type="GeneID" id="57296"/>
<dbReference type="KEGG" id="mmu:57296"/>
<dbReference type="UCSC" id="uc009gbb.2">
    <property type="organism name" value="mouse"/>
</dbReference>
<dbReference type="AGR" id="MGI:1888669"/>
<dbReference type="CTD" id="5714"/>
<dbReference type="MGI" id="MGI:1888669">
    <property type="gene designation" value="Psmd8"/>
</dbReference>
<dbReference type="VEuPathDB" id="HostDB:ENSMUSG00000030591"/>
<dbReference type="eggNOG" id="KOG3151">
    <property type="taxonomic scope" value="Eukaryota"/>
</dbReference>
<dbReference type="GeneTree" id="ENSGT00390000014682"/>
<dbReference type="InParanoid" id="Q9CX56"/>
<dbReference type="OMA" id="HIMDGYF"/>
<dbReference type="OrthoDB" id="409122at2759"/>
<dbReference type="PhylomeDB" id="Q9CX56"/>
<dbReference type="TreeFam" id="TF106233"/>
<dbReference type="Reactome" id="R-MMU-1169091">
    <property type="pathway name" value="Activation of NF-kappaB in B cells"/>
</dbReference>
<dbReference type="Reactome" id="R-MMU-1234176">
    <property type="pathway name" value="Oxygen-dependent proline hydroxylation of Hypoxia-inducible Factor Alpha"/>
</dbReference>
<dbReference type="Reactome" id="R-MMU-1236978">
    <property type="pathway name" value="Cross-presentation of soluble exogenous antigens (endosomes)"/>
</dbReference>
<dbReference type="Reactome" id="R-MMU-174084">
    <property type="pathway name" value="Autodegradation of Cdh1 by Cdh1:APC/C"/>
</dbReference>
<dbReference type="Reactome" id="R-MMU-174154">
    <property type="pathway name" value="APC/C:Cdc20 mediated degradation of Securin"/>
</dbReference>
<dbReference type="Reactome" id="R-MMU-174178">
    <property type="pathway name" value="APC/C:Cdh1 mediated degradation of Cdc20 and other APC/C:Cdh1 targeted proteins in late mitosis/early G1"/>
</dbReference>
<dbReference type="Reactome" id="R-MMU-174184">
    <property type="pathway name" value="Cdc20:Phospho-APC/C mediated degradation of Cyclin A"/>
</dbReference>
<dbReference type="Reactome" id="R-MMU-187577">
    <property type="pathway name" value="SCF(Skp2)-mediated degradation of p27/p21"/>
</dbReference>
<dbReference type="Reactome" id="R-MMU-195253">
    <property type="pathway name" value="Degradation of beta-catenin by the destruction complex"/>
</dbReference>
<dbReference type="Reactome" id="R-MMU-202424">
    <property type="pathway name" value="Downstream TCR signaling"/>
</dbReference>
<dbReference type="Reactome" id="R-MMU-2467813">
    <property type="pathway name" value="Separation of Sister Chromatids"/>
</dbReference>
<dbReference type="Reactome" id="R-MMU-2871837">
    <property type="pathway name" value="FCERI mediated NF-kB activation"/>
</dbReference>
<dbReference type="Reactome" id="R-MMU-349425">
    <property type="pathway name" value="Autodegradation of the E3 ubiquitin ligase COP1"/>
</dbReference>
<dbReference type="Reactome" id="R-MMU-350562">
    <property type="pathway name" value="Regulation of ornithine decarboxylase (ODC)"/>
</dbReference>
<dbReference type="Reactome" id="R-MMU-382556">
    <property type="pathway name" value="ABC-family proteins mediated transport"/>
</dbReference>
<dbReference type="Reactome" id="R-MMU-450408">
    <property type="pathway name" value="AUF1 (hnRNP D0) binds and destabilizes mRNA"/>
</dbReference>
<dbReference type="Reactome" id="R-MMU-4608870">
    <property type="pathway name" value="Asymmetric localization of PCP proteins"/>
</dbReference>
<dbReference type="Reactome" id="R-MMU-4641257">
    <property type="pathway name" value="Degradation of AXIN"/>
</dbReference>
<dbReference type="Reactome" id="R-MMU-4641258">
    <property type="pathway name" value="Degradation of DVL"/>
</dbReference>
<dbReference type="Reactome" id="R-MMU-5358346">
    <property type="pathway name" value="Hedgehog ligand biogenesis"/>
</dbReference>
<dbReference type="Reactome" id="R-MMU-5607761">
    <property type="pathway name" value="Dectin-1 mediated noncanonical NF-kB signaling"/>
</dbReference>
<dbReference type="Reactome" id="R-MMU-5607764">
    <property type="pathway name" value="CLEC7A (Dectin-1) signaling"/>
</dbReference>
<dbReference type="Reactome" id="R-MMU-5610780">
    <property type="pathway name" value="Degradation of GLI1 by the proteasome"/>
</dbReference>
<dbReference type="Reactome" id="R-MMU-5610785">
    <property type="pathway name" value="GLI3 is processed to GLI3R by the proteasome"/>
</dbReference>
<dbReference type="Reactome" id="R-MMU-5632684">
    <property type="pathway name" value="Hedgehog 'on' state"/>
</dbReference>
<dbReference type="Reactome" id="R-MMU-5658442">
    <property type="pathway name" value="Regulation of RAS by GAPs"/>
</dbReference>
<dbReference type="Reactome" id="R-MMU-5668541">
    <property type="pathway name" value="TNFR2 non-canonical NF-kB pathway"/>
</dbReference>
<dbReference type="Reactome" id="R-MMU-5676590">
    <property type="pathway name" value="NIK--&gt;noncanonical NF-kB signaling"/>
</dbReference>
<dbReference type="Reactome" id="R-MMU-5687128">
    <property type="pathway name" value="MAPK6/MAPK4 signaling"/>
</dbReference>
<dbReference type="Reactome" id="R-MMU-5689603">
    <property type="pathway name" value="UCH proteinases"/>
</dbReference>
<dbReference type="Reactome" id="R-MMU-5689880">
    <property type="pathway name" value="Ub-specific processing proteases"/>
</dbReference>
<dbReference type="Reactome" id="R-MMU-68867">
    <property type="pathway name" value="Assembly of the pre-replicative complex"/>
</dbReference>
<dbReference type="Reactome" id="R-MMU-68949">
    <property type="pathway name" value="Orc1 removal from chromatin"/>
</dbReference>
<dbReference type="Reactome" id="R-MMU-69017">
    <property type="pathway name" value="CDK-mediated phosphorylation and removal of Cdc6"/>
</dbReference>
<dbReference type="Reactome" id="R-MMU-69481">
    <property type="pathway name" value="G2/M Checkpoints"/>
</dbReference>
<dbReference type="Reactome" id="R-MMU-69601">
    <property type="pathway name" value="Ubiquitin Mediated Degradation of Phosphorylated Cdc25A"/>
</dbReference>
<dbReference type="Reactome" id="R-MMU-75815">
    <property type="pathway name" value="Ubiquitin-dependent degradation of Cyclin D"/>
</dbReference>
<dbReference type="Reactome" id="R-MMU-8852276">
    <property type="pathway name" value="The role of GTSE1 in G2/M progression after G2 checkpoint"/>
</dbReference>
<dbReference type="Reactome" id="R-MMU-8854050">
    <property type="pathway name" value="FBXL7 down-regulates AURKA during mitotic entry and in early mitosis"/>
</dbReference>
<dbReference type="Reactome" id="R-MMU-8939236">
    <property type="pathway name" value="RUNX1 regulates transcription of genes involved in differentiation of HSCs"/>
</dbReference>
<dbReference type="Reactome" id="R-MMU-8939902">
    <property type="pathway name" value="Regulation of RUNX2 expression and activity"/>
</dbReference>
<dbReference type="Reactome" id="R-MMU-8941858">
    <property type="pathway name" value="Regulation of RUNX3 expression and activity"/>
</dbReference>
<dbReference type="Reactome" id="R-MMU-8948751">
    <property type="pathway name" value="Regulation of PTEN stability and activity"/>
</dbReference>
<dbReference type="Reactome" id="R-MMU-8951664">
    <property type="pathway name" value="Neddylation"/>
</dbReference>
<dbReference type="Reactome" id="R-MMU-9020702">
    <property type="pathway name" value="Interleukin-1 signaling"/>
</dbReference>
<dbReference type="Reactome" id="R-MMU-9755511">
    <property type="pathway name" value="KEAP1-NFE2L2 pathway"/>
</dbReference>
<dbReference type="Reactome" id="R-MMU-9762114">
    <property type="pathway name" value="GSK3B and BTRC:CUL1-mediated-degradation of NFE2L2"/>
</dbReference>
<dbReference type="Reactome" id="R-MMU-983168">
    <property type="pathway name" value="Antigen processing: Ubiquitination &amp; Proteasome degradation"/>
</dbReference>
<dbReference type="Reactome" id="R-MMU-9907900">
    <property type="pathway name" value="Proteasome assembly"/>
</dbReference>
<dbReference type="BioGRID-ORCS" id="57296">
    <property type="hits" value="26 hits in 78 CRISPR screens"/>
</dbReference>
<dbReference type="ChiTaRS" id="Psmd8">
    <property type="organism name" value="mouse"/>
</dbReference>
<dbReference type="PRO" id="PR:Q9CX56"/>
<dbReference type="Proteomes" id="UP000000589">
    <property type="component" value="Chromosome 7"/>
</dbReference>
<dbReference type="RNAct" id="Q9CX56">
    <property type="molecule type" value="protein"/>
</dbReference>
<dbReference type="Bgee" id="ENSMUSG00000030591">
    <property type="expression patterns" value="Expressed in placenta labyrinth and 267 other cell types or tissues"/>
</dbReference>
<dbReference type="ExpressionAtlas" id="Q9CX56">
    <property type="expression patterns" value="baseline and differential"/>
</dbReference>
<dbReference type="GO" id="GO:0022624">
    <property type="term" value="C:proteasome accessory complex"/>
    <property type="evidence" value="ECO:0000314"/>
    <property type="project" value="UniProtKB"/>
</dbReference>
<dbReference type="GO" id="GO:0005838">
    <property type="term" value="C:proteasome regulatory particle"/>
    <property type="evidence" value="ECO:0007669"/>
    <property type="project" value="InterPro"/>
</dbReference>
<dbReference type="GO" id="GO:0006508">
    <property type="term" value="P:proteolysis"/>
    <property type="evidence" value="ECO:0007669"/>
    <property type="project" value="InterPro"/>
</dbReference>
<dbReference type="FunFam" id="1.25.40.990:FF:000001">
    <property type="entry name" value="26S proteasome non-ATPase regulatory subunit"/>
    <property type="match status" value="1"/>
</dbReference>
<dbReference type="Gene3D" id="1.25.40.990">
    <property type="match status" value="1"/>
</dbReference>
<dbReference type="InterPro" id="IPR006746">
    <property type="entry name" value="26S_Psome_Rpn12"/>
</dbReference>
<dbReference type="InterPro" id="IPR033464">
    <property type="entry name" value="CSN8_PSD8_EIF3K"/>
</dbReference>
<dbReference type="InterPro" id="IPR000717">
    <property type="entry name" value="PCI_dom"/>
</dbReference>
<dbReference type="PANTHER" id="PTHR12387">
    <property type="entry name" value="26S PROTEASOME NON-ATPASE REGULATORY SUBUNIT 8"/>
    <property type="match status" value="1"/>
</dbReference>
<dbReference type="PANTHER" id="PTHR12387:SF0">
    <property type="entry name" value="26S PROTEASOME NON-ATPASE REGULATORY SUBUNIT 8"/>
    <property type="match status" value="1"/>
</dbReference>
<dbReference type="Pfam" id="PF10075">
    <property type="entry name" value="CSN8_PSD8_EIF3K"/>
    <property type="match status" value="1"/>
</dbReference>
<dbReference type="PROSITE" id="PS50250">
    <property type="entry name" value="PCI"/>
    <property type="match status" value="1"/>
</dbReference>
<keyword id="KW-1017">Isopeptide bond</keyword>
<keyword id="KW-0647">Proteasome</keyword>
<keyword id="KW-1185">Reference proteome</keyword>
<keyword id="KW-0832">Ubl conjugation</keyword>
<evidence type="ECO:0000250" key="1">
    <source>
        <dbReference type="UniProtKB" id="P48556"/>
    </source>
</evidence>
<evidence type="ECO:0000255" key="2">
    <source>
        <dbReference type="PROSITE-ProRule" id="PRU01185"/>
    </source>
</evidence>
<evidence type="ECO:0000256" key="3">
    <source>
        <dbReference type="SAM" id="MobiDB-lite"/>
    </source>
</evidence>
<evidence type="ECO:0000269" key="4">
    <source>
    </source>
</evidence>
<evidence type="ECO:0000305" key="5"/>
<reference key="1">
    <citation type="journal article" date="2009" name="PLoS Biol.">
        <title>Lineage-specific biology revealed by a finished genome assembly of the mouse.</title>
        <authorList>
            <person name="Church D.M."/>
            <person name="Goodstadt L."/>
            <person name="Hillier L.W."/>
            <person name="Zody M.C."/>
            <person name="Goldstein S."/>
            <person name="She X."/>
            <person name="Bult C.J."/>
            <person name="Agarwala R."/>
            <person name="Cherry J.L."/>
            <person name="DiCuccio M."/>
            <person name="Hlavina W."/>
            <person name="Kapustin Y."/>
            <person name="Meric P."/>
            <person name="Maglott D."/>
            <person name="Birtle Z."/>
            <person name="Marques A.C."/>
            <person name="Graves T."/>
            <person name="Zhou S."/>
            <person name="Teague B."/>
            <person name="Potamousis K."/>
            <person name="Churas C."/>
            <person name="Place M."/>
            <person name="Herschleb J."/>
            <person name="Runnheim R."/>
            <person name="Forrest D."/>
            <person name="Amos-Landgraf J."/>
            <person name="Schwartz D.C."/>
            <person name="Cheng Z."/>
            <person name="Lindblad-Toh K."/>
            <person name="Eichler E.E."/>
            <person name="Ponting C.P."/>
        </authorList>
    </citation>
    <scope>NUCLEOTIDE SEQUENCE [LARGE SCALE GENOMIC DNA]</scope>
    <source>
        <strain>C57BL/6J</strain>
    </source>
</reference>
<reference key="2">
    <citation type="journal article" date="2005" name="Science">
        <title>The transcriptional landscape of the mammalian genome.</title>
        <authorList>
            <person name="Carninci P."/>
            <person name="Kasukawa T."/>
            <person name="Katayama S."/>
            <person name="Gough J."/>
            <person name="Frith M.C."/>
            <person name="Maeda N."/>
            <person name="Oyama R."/>
            <person name="Ravasi T."/>
            <person name="Lenhard B."/>
            <person name="Wells C."/>
            <person name="Kodzius R."/>
            <person name="Shimokawa K."/>
            <person name="Bajic V.B."/>
            <person name="Brenner S.E."/>
            <person name="Batalov S."/>
            <person name="Forrest A.R."/>
            <person name="Zavolan M."/>
            <person name="Davis M.J."/>
            <person name="Wilming L.G."/>
            <person name="Aidinis V."/>
            <person name="Allen J.E."/>
            <person name="Ambesi-Impiombato A."/>
            <person name="Apweiler R."/>
            <person name="Aturaliya R.N."/>
            <person name="Bailey T.L."/>
            <person name="Bansal M."/>
            <person name="Baxter L."/>
            <person name="Beisel K.W."/>
            <person name="Bersano T."/>
            <person name="Bono H."/>
            <person name="Chalk A.M."/>
            <person name="Chiu K.P."/>
            <person name="Choudhary V."/>
            <person name="Christoffels A."/>
            <person name="Clutterbuck D.R."/>
            <person name="Crowe M.L."/>
            <person name="Dalla E."/>
            <person name="Dalrymple B.P."/>
            <person name="de Bono B."/>
            <person name="Della Gatta G."/>
            <person name="di Bernardo D."/>
            <person name="Down T."/>
            <person name="Engstrom P."/>
            <person name="Fagiolini M."/>
            <person name="Faulkner G."/>
            <person name="Fletcher C.F."/>
            <person name="Fukushima T."/>
            <person name="Furuno M."/>
            <person name="Futaki S."/>
            <person name="Gariboldi M."/>
            <person name="Georgii-Hemming P."/>
            <person name="Gingeras T.R."/>
            <person name="Gojobori T."/>
            <person name="Green R.E."/>
            <person name="Gustincich S."/>
            <person name="Harbers M."/>
            <person name="Hayashi Y."/>
            <person name="Hensch T.K."/>
            <person name="Hirokawa N."/>
            <person name="Hill D."/>
            <person name="Huminiecki L."/>
            <person name="Iacono M."/>
            <person name="Ikeo K."/>
            <person name="Iwama A."/>
            <person name="Ishikawa T."/>
            <person name="Jakt M."/>
            <person name="Kanapin A."/>
            <person name="Katoh M."/>
            <person name="Kawasawa Y."/>
            <person name="Kelso J."/>
            <person name="Kitamura H."/>
            <person name="Kitano H."/>
            <person name="Kollias G."/>
            <person name="Krishnan S.P."/>
            <person name="Kruger A."/>
            <person name="Kummerfeld S.K."/>
            <person name="Kurochkin I.V."/>
            <person name="Lareau L.F."/>
            <person name="Lazarevic D."/>
            <person name="Lipovich L."/>
            <person name="Liu J."/>
            <person name="Liuni S."/>
            <person name="McWilliam S."/>
            <person name="Madan Babu M."/>
            <person name="Madera M."/>
            <person name="Marchionni L."/>
            <person name="Matsuda H."/>
            <person name="Matsuzawa S."/>
            <person name="Miki H."/>
            <person name="Mignone F."/>
            <person name="Miyake S."/>
            <person name="Morris K."/>
            <person name="Mottagui-Tabar S."/>
            <person name="Mulder N."/>
            <person name="Nakano N."/>
            <person name="Nakauchi H."/>
            <person name="Ng P."/>
            <person name="Nilsson R."/>
            <person name="Nishiguchi S."/>
            <person name="Nishikawa S."/>
            <person name="Nori F."/>
            <person name="Ohara O."/>
            <person name="Okazaki Y."/>
            <person name="Orlando V."/>
            <person name="Pang K.C."/>
            <person name="Pavan W.J."/>
            <person name="Pavesi G."/>
            <person name="Pesole G."/>
            <person name="Petrovsky N."/>
            <person name="Piazza S."/>
            <person name="Reed J."/>
            <person name="Reid J.F."/>
            <person name="Ring B.Z."/>
            <person name="Ringwald M."/>
            <person name="Rost B."/>
            <person name="Ruan Y."/>
            <person name="Salzberg S.L."/>
            <person name="Sandelin A."/>
            <person name="Schneider C."/>
            <person name="Schoenbach C."/>
            <person name="Sekiguchi K."/>
            <person name="Semple C.A."/>
            <person name="Seno S."/>
            <person name="Sessa L."/>
            <person name="Sheng Y."/>
            <person name="Shibata Y."/>
            <person name="Shimada H."/>
            <person name="Shimada K."/>
            <person name="Silva D."/>
            <person name="Sinclair B."/>
            <person name="Sperling S."/>
            <person name="Stupka E."/>
            <person name="Sugiura K."/>
            <person name="Sultana R."/>
            <person name="Takenaka Y."/>
            <person name="Taki K."/>
            <person name="Tammoja K."/>
            <person name="Tan S.L."/>
            <person name="Tang S."/>
            <person name="Taylor M.S."/>
            <person name="Tegner J."/>
            <person name="Teichmann S.A."/>
            <person name="Ueda H.R."/>
            <person name="van Nimwegen E."/>
            <person name="Verardo R."/>
            <person name="Wei C.L."/>
            <person name="Yagi K."/>
            <person name="Yamanishi H."/>
            <person name="Zabarovsky E."/>
            <person name="Zhu S."/>
            <person name="Zimmer A."/>
            <person name="Hide W."/>
            <person name="Bult C."/>
            <person name="Grimmond S.M."/>
            <person name="Teasdale R.D."/>
            <person name="Liu E.T."/>
            <person name="Brusic V."/>
            <person name="Quackenbush J."/>
            <person name="Wahlestedt C."/>
            <person name="Mattick J.S."/>
            <person name="Hume D.A."/>
            <person name="Kai C."/>
            <person name="Sasaki D."/>
            <person name="Tomaru Y."/>
            <person name="Fukuda S."/>
            <person name="Kanamori-Katayama M."/>
            <person name="Suzuki M."/>
            <person name="Aoki J."/>
            <person name="Arakawa T."/>
            <person name="Iida J."/>
            <person name="Imamura K."/>
            <person name="Itoh M."/>
            <person name="Kato T."/>
            <person name="Kawaji H."/>
            <person name="Kawagashira N."/>
            <person name="Kawashima T."/>
            <person name="Kojima M."/>
            <person name="Kondo S."/>
            <person name="Konno H."/>
            <person name="Nakano K."/>
            <person name="Ninomiya N."/>
            <person name="Nishio T."/>
            <person name="Okada M."/>
            <person name="Plessy C."/>
            <person name="Shibata K."/>
            <person name="Shiraki T."/>
            <person name="Suzuki S."/>
            <person name="Tagami M."/>
            <person name="Waki K."/>
            <person name="Watahiki A."/>
            <person name="Okamura-Oho Y."/>
            <person name="Suzuki H."/>
            <person name="Kawai J."/>
            <person name="Hayashizaki Y."/>
        </authorList>
    </citation>
    <scope>NUCLEOTIDE SEQUENCE [LARGE SCALE MRNA] OF 39-353</scope>
    <source>
        <strain>C57BL/6J</strain>
    </source>
</reference>
<reference key="3">
    <citation type="journal article" date="2006" name="Circ. Res.">
        <title>Mapping the murine cardiac 26S proteasome complexes.</title>
        <authorList>
            <person name="Gomes A.V."/>
            <person name="Zong C."/>
            <person name="Edmondson R.D."/>
            <person name="Li X."/>
            <person name="Stefani E."/>
            <person name="Zhang J."/>
            <person name="Jones R.C."/>
            <person name="Thyparambil S."/>
            <person name="Wang G.W."/>
            <person name="Qiao X."/>
            <person name="Bardag-Gorce F."/>
            <person name="Ping P."/>
        </authorList>
    </citation>
    <scope>IDENTIFICATION IN THE 19S PROTEASOME REGULATORY COMPLEX</scope>
</reference>
<reference key="4">
    <citation type="journal article" date="2010" name="Cell">
        <title>A tissue-specific atlas of mouse protein phosphorylation and expression.</title>
        <authorList>
            <person name="Huttlin E.L."/>
            <person name="Jedrychowski M.P."/>
            <person name="Elias J.E."/>
            <person name="Goswami T."/>
            <person name="Rad R."/>
            <person name="Beausoleil S.A."/>
            <person name="Villen J."/>
            <person name="Haas W."/>
            <person name="Sowa M.E."/>
            <person name="Gygi S.P."/>
        </authorList>
    </citation>
    <scope>IDENTIFICATION BY MASS SPECTROMETRY [LARGE SCALE ANALYSIS]</scope>
    <source>
        <tissue>Brain</tissue>
        <tissue>Brown adipose tissue</tissue>
        <tissue>Heart</tissue>
        <tissue>Kidney</tissue>
        <tissue>Liver</tissue>
        <tissue>Lung</tissue>
        <tissue>Pancreas</tissue>
        <tissue>Spleen</tissue>
        <tissue>Testis</tissue>
    </source>
</reference>
<reference key="5">
    <citation type="journal article" date="2019" name="Exp. Cell Res.">
        <title>Fam208a orchestrates interaction protein network essential for early embryonic development and cell division.</title>
        <authorList>
            <person name="Gresakova V."/>
            <person name="Novosadova V."/>
            <person name="Prochazkova M."/>
            <person name="Bhargava S."/>
            <person name="Jenickova I."/>
            <person name="Prochazka J."/>
            <person name="Sedlacek R."/>
        </authorList>
    </citation>
    <scope>INTERACTION WITH TASOR</scope>
    <scope>TISSUE SPECIFICITY</scope>
</reference>
<comment type="function">
    <text evidence="1">Component of the 26S proteasome, a multiprotein complex involved in the ATP-dependent degradation of ubiquitinated proteins. This complex plays a key role in the maintenance of protein homeostasis by removing misfolded or damaged proteins, which could impair cellular functions, and by removing proteins whose functions are no longer required. Therefore, the proteasome participates in numerous cellular processes, including cell cycle progression, apoptosis, or DNA damage repair.</text>
</comment>
<comment type="subunit">
    <text evidence="1 4">Component of the 19S proteasome regulatory particle complex. The 26S proteasome consists of a 20S core particle (CP) and two 19S regulatory subunits (RP). The regulatory particle is made of a lid composed of 9 subunits including PSMD8, a base containing 6 ATPases and few additional components. Interacts with DDI2 (By similarity). Interacts with TASOR (PubMed:31112734).</text>
</comment>
<comment type="tissue specificity">
    <text evidence="4">Expressed in the Sertoli cells of the testis.</text>
</comment>
<comment type="similarity">
    <text evidence="5">Belongs to the proteasome subunit S14 family.</text>
</comment>
<comment type="caution">
    <text evidence="5">It is uncertain whether Met-1 or Met-65 is the initiator.</text>
</comment>
<comment type="sequence caution" evidence="5">
    <conflict type="erroneous initiation">
        <sequence resource="EMBL-CDS" id="BAB32006"/>
    </conflict>
    <text>Truncated N-terminus.</text>
</comment>
<proteinExistence type="evidence at protein level"/>